<organism>
    <name type="scientific">Salinibacter ruber (strain DSM 13855 / M31)</name>
    <dbReference type="NCBI Taxonomy" id="309807"/>
    <lineage>
        <taxon>Bacteria</taxon>
        <taxon>Pseudomonadati</taxon>
        <taxon>Rhodothermota</taxon>
        <taxon>Rhodothermia</taxon>
        <taxon>Rhodothermales</taxon>
        <taxon>Salinibacteraceae</taxon>
        <taxon>Salinibacter</taxon>
    </lineage>
</organism>
<feature type="chain" id="PRO_0000258748" description="Large ribosomal subunit protein bL35">
    <location>
        <begin position="1"/>
        <end position="65"/>
    </location>
</feature>
<feature type="region of interest" description="Disordered" evidence="2">
    <location>
        <begin position="1"/>
        <end position="65"/>
    </location>
</feature>
<feature type="compositionally biased region" description="Basic residues" evidence="2">
    <location>
        <begin position="1"/>
        <end position="45"/>
    </location>
</feature>
<feature type="compositionally biased region" description="Basic and acidic residues" evidence="2">
    <location>
        <begin position="48"/>
        <end position="57"/>
    </location>
</feature>
<gene>
    <name evidence="1" type="primary">rpmI</name>
    <name type="ordered locus">SRU_2804</name>
</gene>
<name>RL35_SALRD</name>
<protein>
    <recommendedName>
        <fullName evidence="1">Large ribosomal subunit protein bL35</fullName>
    </recommendedName>
    <alternativeName>
        <fullName evidence="3">50S ribosomal protein L35</fullName>
    </alternativeName>
</protein>
<evidence type="ECO:0000255" key="1">
    <source>
        <dbReference type="HAMAP-Rule" id="MF_00514"/>
    </source>
</evidence>
<evidence type="ECO:0000256" key="2">
    <source>
        <dbReference type="SAM" id="MobiDB-lite"/>
    </source>
</evidence>
<evidence type="ECO:0000305" key="3"/>
<sequence>MPKMKSHSGAKKRFKKTGNGKIKRKKANKGHLLTKKNAKRKRQLRKSVVVDDKANRDRIKRMLST</sequence>
<proteinExistence type="inferred from homology"/>
<comment type="similarity">
    <text evidence="1">Belongs to the bacterial ribosomal protein bL35 family.</text>
</comment>
<comment type="sequence caution" evidence="3">
    <conflict type="erroneous initiation">
        <sequence resource="EMBL-CDS" id="ABC44500"/>
    </conflict>
</comment>
<reference key="1">
    <citation type="journal article" date="2005" name="Proc. Natl. Acad. Sci. U.S.A.">
        <title>The genome of Salinibacter ruber: convergence and gene exchange among hyperhalophilic bacteria and archaea.</title>
        <authorList>
            <person name="Mongodin E.F."/>
            <person name="Nelson K.E."/>
            <person name="Daugherty S."/>
            <person name="DeBoy R.T."/>
            <person name="Wister J."/>
            <person name="Khouri H."/>
            <person name="Weidman J."/>
            <person name="Walsh D.A."/>
            <person name="Papke R.T."/>
            <person name="Sanchez Perez G."/>
            <person name="Sharma A.K."/>
            <person name="Nesbo C.L."/>
            <person name="MacLeod D."/>
            <person name="Bapteste E."/>
            <person name="Doolittle W.F."/>
            <person name="Charlebois R.L."/>
            <person name="Legault B."/>
            <person name="Rodriguez-Valera F."/>
        </authorList>
    </citation>
    <scope>NUCLEOTIDE SEQUENCE [LARGE SCALE GENOMIC DNA]</scope>
    <source>
        <strain>DSM 13855 / CECT 5946 / M31</strain>
    </source>
</reference>
<accession>Q2RYT6</accession>
<dbReference type="EMBL" id="CP000159">
    <property type="protein sequence ID" value="ABC44500.1"/>
    <property type="status" value="ALT_INIT"/>
    <property type="molecule type" value="Genomic_DNA"/>
</dbReference>
<dbReference type="RefSeq" id="WP_103015481.1">
    <property type="nucleotide sequence ID" value="NC_007677.1"/>
</dbReference>
<dbReference type="RefSeq" id="YP_446895.1">
    <property type="nucleotide sequence ID" value="NC_007677.1"/>
</dbReference>
<dbReference type="SMR" id="Q2RYT6"/>
<dbReference type="STRING" id="309807.SRU_2804"/>
<dbReference type="EnsemblBacteria" id="ABC44500">
    <property type="protein sequence ID" value="ABC44500"/>
    <property type="gene ID" value="SRU_2804"/>
</dbReference>
<dbReference type="GeneID" id="83729819"/>
<dbReference type="KEGG" id="sru:SRU_2804"/>
<dbReference type="PATRIC" id="fig|309807.25.peg.2924"/>
<dbReference type="eggNOG" id="COG0291">
    <property type="taxonomic scope" value="Bacteria"/>
</dbReference>
<dbReference type="HOGENOM" id="CLU_2107300_0_0_10"/>
<dbReference type="OrthoDB" id="47476at2"/>
<dbReference type="Proteomes" id="UP000008674">
    <property type="component" value="Chromosome"/>
</dbReference>
<dbReference type="GO" id="GO:0022625">
    <property type="term" value="C:cytosolic large ribosomal subunit"/>
    <property type="evidence" value="ECO:0007669"/>
    <property type="project" value="TreeGrafter"/>
</dbReference>
<dbReference type="GO" id="GO:0003735">
    <property type="term" value="F:structural constituent of ribosome"/>
    <property type="evidence" value="ECO:0007669"/>
    <property type="project" value="InterPro"/>
</dbReference>
<dbReference type="GO" id="GO:0006412">
    <property type="term" value="P:translation"/>
    <property type="evidence" value="ECO:0007669"/>
    <property type="project" value="UniProtKB-UniRule"/>
</dbReference>
<dbReference type="FunFam" id="4.10.410.60:FF:000001">
    <property type="entry name" value="50S ribosomal protein L35"/>
    <property type="match status" value="1"/>
</dbReference>
<dbReference type="Gene3D" id="4.10.410.60">
    <property type="match status" value="1"/>
</dbReference>
<dbReference type="HAMAP" id="MF_00514">
    <property type="entry name" value="Ribosomal_bL35"/>
    <property type="match status" value="1"/>
</dbReference>
<dbReference type="InterPro" id="IPR001706">
    <property type="entry name" value="Ribosomal_bL35"/>
</dbReference>
<dbReference type="InterPro" id="IPR021137">
    <property type="entry name" value="Ribosomal_bL35-like"/>
</dbReference>
<dbReference type="InterPro" id="IPR018265">
    <property type="entry name" value="Ribosomal_bL35_CS"/>
</dbReference>
<dbReference type="InterPro" id="IPR037229">
    <property type="entry name" value="Ribosomal_bL35_sf"/>
</dbReference>
<dbReference type="NCBIfam" id="TIGR00001">
    <property type="entry name" value="rpmI_bact"/>
    <property type="match status" value="1"/>
</dbReference>
<dbReference type="PANTHER" id="PTHR33343">
    <property type="entry name" value="54S RIBOSOMAL PROTEIN BL35M"/>
    <property type="match status" value="1"/>
</dbReference>
<dbReference type="PANTHER" id="PTHR33343:SF1">
    <property type="entry name" value="LARGE RIBOSOMAL SUBUNIT PROTEIN BL35M"/>
    <property type="match status" value="1"/>
</dbReference>
<dbReference type="Pfam" id="PF01632">
    <property type="entry name" value="Ribosomal_L35p"/>
    <property type="match status" value="1"/>
</dbReference>
<dbReference type="PRINTS" id="PR00064">
    <property type="entry name" value="RIBOSOMALL35"/>
</dbReference>
<dbReference type="SUPFAM" id="SSF143034">
    <property type="entry name" value="L35p-like"/>
    <property type="match status" value="1"/>
</dbReference>
<dbReference type="PROSITE" id="PS00936">
    <property type="entry name" value="RIBOSOMAL_L35"/>
    <property type="match status" value="1"/>
</dbReference>
<keyword id="KW-1185">Reference proteome</keyword>
<keyword id="KW-0687">Ribonucleoprotein</keyword>
<keyword id="KW-0689">Ribosomal protein</keyword>